<reference key="1">
    <citation type="submission" date="2007-02" db="EMBL/GenBank/DDBJ databases">
        <title>Complete sequence of chromosome of Yersinia pestis Pestoides F.</title>
        <authorList>
            <consortium name="US DOE Joint Genome Institute"/>
            <person name="Copeland A."/>
            <person name="Lucas S."/>
            <person name="Lapidus A."/>
            <person name="Barry K."/>
            <person name="Detter J.C."/>
            <person name="Glavina del Rio T."/>
            <person name="Hammon N."/>
            <person name="Israni S."/>
            <person name="Dalin E."/>
            <person name="Tice H."/>
            <person name="Pitluck S."/>
            <person name="Di Bartolo G."/>
            <person name="Chain P."/>
            <person name="Malfatti S."/>
            <person name="Shin M."/>
            <person name="Vergez L."/>
            <person name="Schmutz J."/>
            <person name="Larimer F."/>
            <person name="Land M."/>
            <person name="Hauser L."/>
            <person name="Worsham P."/>
            <person name="Chu M."/>
            <person name="Bearden S."/>
            <person name="Garcia E."/>
            <person name="Richardson P."/>
        </authorList>
    </citation>
    <scope>NUCLEOTIDE SEQUENCE [LARGE SCALE GENOMIC DNA]</scope>
    <source>
        <strain>Pestoides F</strain>
    </source>
</reference>
<name>FOLD_YERPP</name>
<gene>
    <name evidence="1" type="primary">folD</name>
    <name type="ordered locus">YPDSF_2708</name>
</gene>
<comment type="function">
    <text evidence="1">Catalyzes the oxidation of 5,10-methylenetetrahydrofolate to 5,10-methenyltetrahydrofolate and then the hydrolysis of 5,10-methenyltetrahydrofolate to 10-formyltetrahydrofolate.</text>
</comment>
<comment type="catalytic activity">
    <reaction evidence="1">
        <text>(6R)-5,10-methylene-5,6,7,8-tetrahydrofolate + NADP(+) = (6R)-5,10-methenyltetrahydrofolate + NADPH</text>
        <dbReference type="Rhea" id="RHEA:22812"/>
        <dbReference type="ChEBI" id="CHEBI:15636"/>
        <dbReference type="ChEBI" id="CHEBI:57455"/>
        <dbReference type="ChEBI" id="CHEBI:57783"/>
        <dbReference type="ChEBI" id="CHEBI:58349"/>
        <dbReference type="EC" id="1.5.1.5"/>
    </reaction>
</comment>
<comment type="catalytic activity">
    <reaction evidence="1">
        <text>(6R)-5,10-methenyltetrahydrofolate + H2O = (6R)-10-formyltetrahydrofolate + H(+)</text>
        <dbReference type="Rhea" id="RHEA:23700"/>
        <dbReference type="ChEBI" id="CHEBI:15377"/>
        <dbReference type="ChEBI" id="CHEBI:15378"/>
        <dbReference type="ChEBI" id="CHEBI:57455"/>
        <dbReference type="ChEBI" id="CHEBI:195366"/>
        <dbReference type="EC" id="3.5.4.9"/>
    </reaction>
</comment>
<comment type="pathway">
    <text evidence="1">One-carbon metabolism; tetrahydrofolate interconversion.</text>
</comment>
<comment type="subunit">
    <text evidence="1">Homodimer.</text>
</comment>
<comment type="similarity">
    <text evidence="1">Belongs to the tetrahydrofolate dehydrogenase/cyclohydrolase family.</text>
</comment>
<organism>
    <name type="scientific">Yersinia pestis (strain Pestoides F)</name>
    <dbReference type="NCBI Taxonomy" id="386656"/>
    <lineage>
        <taxon>Bacteria</taxon>
        <taxon>Pseudomonadati</taxon>
        <taxon>Pseudomonadota</taxon>
        <taxon>Gammaproteobacteria</taxon>
        <taxon>Enterobacterales</taxon>
        <taxon>Yersiniaceae</taxon>
        <taxon>Yersinia</taxon>
    </lineage>
</organism>
<evidence type="ECO:0000255" key="1">
    <source>
        <dbReference type="HAMAP-Rule" id="MF_01576"/>
    </source>
</evidence>
<feature type="chain" id="PRO_0000305895" description="Bifunctional protein FolD">
    <location>
        <begin position="1"/>
        <end position="288"/>
    </location>
</feature>
<feature type="binding site" evidence="1">
    <location>
        <begin position="166"/>
        <end position="168"/>
    </location>
    <ligand>
        <name>NADP(+)</name>
        <dbReference type="ChEBI" id="CHEBI:58349"/>
    </ligand>
</feature>
<feature type="binding site" evidence="1">
    <location>
        <position position="232"/>
    </location>
    <ligand>
        <name>NADP(+)</name>
        <dbReference type="ChEBI" id="CHEBI:58349"/>
    </ligand>
</feature>
<sequence length="288" mass="30983">MSAKIIDGKTIAQQVRNEVAAVVQQRLAAGKRAPGLAVVLVGENPASQIYVASKRKACEEVGFVSRSYDLPMATSEAELLALIDSLNEDTEIDGILIQLPLPNGIDNVKVLERIHPDKDVDGFHPYNVGRLCQRAPKLRACTPRGIMTLLERYDIPTYGLNAVVVGASNIVGRPMSLELLLAGCTTTVTHRFTKNLRHHIENADLLVVAVGKPGFIPGEWIKPGAIVIDVGINRLESGKVVGDVAFDVAAERAGWITPVPGGVGPMTVATLIQNTLQACEEYHDISQN</sequence>
<dbReference type="EC" id="1.5.1.5" evidence="1"/>
<dbReference type="EC" id="3.5.4.9" evidence="1"/>
<dbReference type="EMBL" id="CP000668">
    <property type="protein sequence ID" value="ABP41072.1"/>
    <property type="molecule type" value="Genomic_DNA"/>
</dbReference>
<dbReference type="RefSeq" id="WP_002209774.1">
    <property type="nucleotide sequence ID" value="NZ_CP009715.1"/>
</dbReference>
<dbReference type="SMR" id="A4TP60"/>
<dbReference type="GeneID" id="57975784"/>
<dbReference type="KEGG" id="ypp:YPDSF_2708"/>
<dbReference type="PATRIC" id="fig|386656.14.peg.4253"/>
<dbReference type="UniPathway" id="UPA00193"/>
<dbReference type="GO" id="GO:0005829">
    <property type="term" value="C:cytosol"/>
    <property type="evidence" value="ECO:0007669"/>
    <property type="project" value="TreeGrafter"/>
</dbReference>
<dbReference type="GO" id="GO:0004477">
    <property type="term" value="F:methenyltetrahydrofolate cyclohydrolase activity"/>
    <property type="evidence" value="ECO:0007669"/>
    <property type="project" value="UniProtKB-UniRule"/>
</dbReference>
<dbReference type="GO" id="GO:0004488">
    <property type="term" value="F:methylenetetrahydrofolate dehydrogenase (NADP+) activity"/>
    <property type="evidence" value="ECO:0007669"/>
    <property type="project" value="UniProtKB-UniRule"/>
</dbReference>
<dbReference type="GO" id="GO:0000105">
    <property type="term" value="P:L-histidine biosynthetic process"/>
    <property type="evidence" value="ECO:0007669"/>
    <property type="project" value="UniProtKB-KW"/>
</dbReference>
<dbReference type="GO" id="GO:0009086">
    <property type="term" value="P:methionine biosynthetic process"/>
    <property type="evidence" value="ECO:0007669"/>
    <property type="project" value="UniProtKB-KW"/>
</dbReference>
<dbReference type="GO" id="GO:0006164">
    <property type="term" value="P:purine nucleotide biosynthetic process"/>
    <property type="evidence" value="ECO:0007669"/>
    <property type="project" value="UniProtKB-KW"/>
</dbReference>
<dbReference type="GO" id="GO:0035999">
    <property type="term" value="P:tetrahydrofolate interconversion"/>
    <property type="evidence" value="ECO:0007669"/>
    <property type="project" value="UniProtKB-UniRule"/>
</dbReference>
<dbReference type="CDD" id="cd01080">
    <property type="entry name" value="NAD_bind_m-THF_DH_Cyclohyd"/>
    <property type="match status" value="1"/>
</dbReference>
<dbReference type="FunFam" id="3.40.50.10860:FF:000001">
    <property type="entry name" value="Bifunctional protein FolD"/>
    <property type="match status" value="1"/>
</dbReference>
<dbReference type="FunFam" id="3.40.50.720:FF:000006">
    <property type="entry name" value="Bifunctional protein FolD"/>
    <property type="match status" value="1"/>
</dbReference>
<dbReference type="Gene3D" id="3.40.50.10860">
    <property type="entry name" value="Leucine Dehydrogenase, chain A, domain 1"/>
    <property type="match status" value="1"/>
</dbReference>
<dbReference type="Gene3D" id="3.40.50.720">
    <property type="entry name" value="NAD(P)-binding Rossmann-like Domain"/>
    <property type="match status" value="1"/>
</dbReference>
<dbReference type="HAMAP" id="MF_01576">
    <property type="entry name" value="THF_DHG_CYH"/>
    <property type="match status" value="1"/>
</dbReference>
<dbReference type="InterPro" id="IPR046346">
    <property type="entry name" value="Aminoacid_DH-like_N_sf"/>
</dbReference>
<dbReference type="InterPro" id="IPR036291">
    <property type="entry name" value="NAD(P)-bd_dom_sf"/>
</dbReference>
<dbReference type="InterPro" id="IPR000672">
    <property type="entry name" value="THF_DH/CycHdrlase"/>
</dbReference>
<dbReference type="InterPro" id="IPR020630">
    <property type="entry name" value="THF_DH/CycHdrlase_cat_dom"/>
</dbReference>
<dbReference type="InterPro" id="IPR020867">
    <property type="entry name" value="THF_DH/CycHdrlase_CS"/>
</dbReference>
<dbReference type="InterPro" id="IPR020631">
    <property type="entry name" value="THF_DH/CycHdrlase_NAD-bd_dom"/>
</dbReference>
<dbReference type="NCBIfam" id="NF008058">
    <property type="entry name" value="PRK10792.1"/>
    <property type="match status" value="1"/>
</dbReference>
<dbReference type="NCBIfam" id="NF010783">
    <property type="entry name" value="PRK14186.1"/>
    <property type="match status" value="1"/>
</dbReference>
<dbReference type="PANTHER" id="PTHR48099:SF5">
    <property type="entry name" value="C-1-TETRAHYDROFOLATE SYNTHASE, CYTOPLASMIC"/>
    <property type="match status" value="1"/>
</dbReference>
<dbReference type="PANTHER" id="PTHR48099">
    <property type="entry name" value="C-1-TETRAHYDROFOLATE SYNTHASE, CYTOPLASMIC-RELATED"/>
    <property type="match status" value="1"/>
</dbReference>
<dbReference type="Pfam" id="PF00763">
    <property type="entry name" value="THF_DHG_CYH"/>
    <property type="match status" value="1"/>
</dbReference>
<dbReference type="Pfam" id="PF02882">
    <property type="entry name" value="THF_DHG_CYH_C"/>
    <property type="match status" value="1"/>
</dbReference>
<dbReference type="PRINTS" id="PR00085">
    <property type="entry name" value="THFDHDRGNASE"/>
</dbReference>
<dbReference type="SUPFAM" id="SSF53223">
    <property type="entry name" value="Aminoacid dehydrogenase-like, N-terminal domain"/>
    <property type="match status" value="1"/>
</dbReference>
<dbReference type="SUPFAM" id="SSF51735">
    <property type="entry name" value="NAD(P)-binding Rossmann-fold domains"/>
    <property type="match status" value="1"/>
</dbReference>
<dbReference type="PROSITE" id="PS00766">
    <property type="entry name" value="THF_DHG_CYH_1"/>
    <property type="match status" value="1"/>
</dbReference>
<dbReference type="PROSITE" id="PS00767">
    <property type="entry name" value="THF_DHG_CYH_2"/>
    <property type="match status" value="1"/>
</dbReference>
<accession>A4TP60</accession>
<protein>
    <recommendedName>
        <fullName evidence="1">Bifunctional protein FolD</fullName>
    </recommendedName>
    <domain>
        <recommendedName>
            <fullName evidence="1">Methylenetetrahydrofolate dehydrogenase</fullName>
            <ecNumber evidence="1">1.5.1.5</ecNumber>
        </recommendedName>
    </domain>
    <domain>
        <recommendedName>
            <fullName evidence="1">Methenyltetrahydrofolate cyclohydrolase</fullName>
            <ecNumber evidence="1">3.5.4.9</ecNumber>
        </recommendedName>
    </domain>
</protein>
<proteinExistence type="inferred from homology"/>
<keyword id="KW-0028">Amino-acid biosynthesis</keyword>
<keyword id="KW-0368">Histidine biosynthesis</keyword>
<keyword id="KW-0378">Hydrolase</keyword>
<keyword id="KW-0486">Methionine biosynthesis</keyword>
<keyword id="KW-0511">Multifunctional enzyme</keyword>
<keyword id="KW-0521">NADP</keyword>
<keyword id="KW-0554">One-carbon metabolism</keyword>
<keyword id="KW-0560">Oxidoreductase</keyword>
<keyword id="KW-0658">Purine biosynthesis</keyword>